<name>GPT_DICDI</name>
<organism>
    <name type="scientific">Dictyostelium discoideum</name>
    <name type="common">Social amoeba</name>
    <dbReference type="NCBI Taxonomy" id="44689"/>
    <lineage>
        <taxon>Eukaryota</taxon>
        <taxon>Amoebozoa</taxon>
        <taxon>Evosea</taxon>
        <taxon>Eumycetozoa</taxon>
        <taxon>Dictyostelia</taxon>
        <taxon>Dictyosteliales</taxon>
        <taxon>Dictyosteliaceae</taxon>
        <taxon>Dictyostelium</taxon>
    </lineage>
</organism>
<protein>
    <recommendedName>
        <fullName>UDP-N-acetylglucosamine--dolichyl-phosphate N-acetylglucosaminephosphotransferase</fullName>
        <ecNumber evidence="2">2.7.8.15</ecNumber>
    </recommendedName>
    <alternativeName>
        <fullName>GlcNAc-1-P transferase</fullName>
        <shortName>G1PT</shortName>
        <shortName>GPT</shortName>
    </alternativeName>
    <alternativeName>
        <fullName>N-acetylglucosamine-1-phosphate transferase</fullName>
    </alternativeName>
</protein>
<dbReference type="EC" id="2.7.8.15" evidence="2"/>
<dbReference type="EMBL" id="AAFI02000168">
    <property type="status" value="NOT_ANNOTATED_CDS"/>
    <property type="molecule type" value="Genomic_DNA"/>
</dbReference>
<dbReference type="EMBL" id="AAFI02000169">
    <property type="status" value="NOT_ANNOTATED_CDS"/>
    <property type="molecule type" value="Genomic_DNA"/>
</dbReference>
<dbReference type="SMR" id="P0CD61"/>
<dbReference type="FunCoup" id="P0CD61">
    <property type="interactions" value="271"/>
</dbReference>
<dbReference type="STRING" id="44689.P0CD61"/>
<dbReference type="dictyBase" id="DDB_G0290751">
    <property type="gene designation" value="alg7"/>
</dbReference>
<dbReference type="InParanoid" id="P0CD61"/>
<dbReference type="OMA" id="LPHFNAR"/>
<dbReference type="PhylomeDB" id="P0CD61"/>
<dbReference type="Reactome" id="R-DDI-446193">
    <property type="pathway name" value="Biosynthesis of the N-glycan precursor (dolichol lipid-linked oligosaccharide, LLO) and transfer to a nascent protein"/>
</dbReference>
<dbReference type="UniPathway" id="UPA00378"/>
<dbReference type="PRO" id="PR:P0CD61"/>
<dbReference type="Proteomes" id="UP000002195">
    <property type="component" value="Chromosome 5"/>
</dbReference>
<dbReference type="GO" id="GO:0005789">
    <property type="term" value="C:endoplasmic reticulum membrane"/>
    <property type="evidence" value="ECO:0007669"/>
    <property type="project" value="UniProtKB-SubCell"/>
</dbReference>
<dbReference type="GO" id="GO:0016020">
    <property type="term" value="C:membrane"/>
    <property type="evidence" value="ECO:0000318"/>
    <property type="project" value="GO_Central"/>
</dbReference>
<dbReference type="GO" id="GO:0016757">
    <property type="term" value="F:glycosyltransferase activity"/>
    <property type="evidence" value="ECO:0007669"/>
    <property type="project" value="UniProtKB-KW"/>
</dbReference>
<dbReference type="GO" id="GO:0046872">
    <property type="term" value="F:metal ion binding"/>
    <property type="evidence" value="ECO:0007669"/>
    <property type="project" value="UniProtKB-KW"/>
</dbReference>
<dbReference type="GO" id="GO:0003975">
    <property type="term" value="F:UDP-N-acetylglucosamine-dolichyl-phosphate N-acetylglucosaminephosphotransferase activity"/>
    <property type="evidence" value="ECO:0000250"/>
    <property type="project" value="dictyBase"/>
</dbReference>
<dbReference type="GO" id="GO:0006488">
    <property type="term" value="P:dolichol-linked oligosaccharide biosynthetic process"/>
    <property type="evidence" value="ECO:0007669"/>
    <property type="project" value="InterPro"/>
</dbReference>
<dbReference type="CDD" id="cd06855">
    <property type="entry name" value="GT_GPT_euk"/>
    <property type="match status" value="1"/>
</dbReference>
<dbReference type="InterPro" id="IPR000715">
    <property type="entry name" value="Glycosyl_transferase_4"/>
</dbReference>
<dbReference type="InterPro" id="IPR033895">
    <property type="entry name" value="GPT"/>
</dbReference>
<dbReference type="PANTHER" id="PTHR10571">
    <property type="entry name" value="UDP-N-ACETYLGLUCOSAMINE--DOLICHYL-PHOSPHATE N-ACETYLGLUCOSAMINEPHOSPHOTRANSFERASE"/>
    <property type="match status" value="1"/>
</dbReference>
<dbReference type="PANTHER" id="PTHR10571:SF0">
    <property type="entry name" value="UDP-N-ACETYLGLUCOSAMINE--DOLICHYL-PHOSPHATE N-ACETYLGLUCOSAMINEPHOSPHOTRANSFERASE"/>
    <property type="match status" value="1"/>
</dbReference>
<dbReference type="Pfam" id="PF00953">
    <property type="entry name" value="Glycos_transf_4"/>
    <property type="match status" value="1"/>
</dbReference>
<proteinExistence type="inferred from homology"/>
<comment type="function">
    <text evidence="2">UDP-N-acetylglucosamine--dolichyl-phosphate N-acetylglucosaminephosphotransferase that operates in the biosynthetic pathway of dolichol-linked oligosaccharides, the glycan precursors employed in protein asparagine (N)-glycosylation. The assembly of dolichol-linked oligosaccharides begins on the cytosolic side of the endoplasmic reticulum membrane and finishes in its lumen. The sequential addition of sugars to dolichol pyrophosphate produces dolichol-linked oligosaccharides containing fourteen sugars, including two GlcNAcs, nine mannoses and three glucoses. Once assembled, the oligosaccharide is transferred from the lipid to nascent proteins by oligosaccharyltransferases. Catalyzes the initial step of dolichol-linked oligosaccharide biosynthesis, transfering GlcNAc-1-P from cytosolic UDP-GlcNAc onto the carrier lipid dolichyl phosphate (P-dolichol), yielding GlcNAc-P-P-dolichol embedded in the cytoplasmic leaflet of the endoplasmic reticulum membrane.</text>
</comment>
<comment type="catalytic activity">
    <reaction evidence="2">
        <text>a di-trans,poly-cis-dolichyl phosphate + UDP-N-acetyl-alpha-D-glucosamine = an N-acetyl-alpha-D-glucosaminyl-diphospho-di-trans,poly-cis-dolichol + UMP</text>
        <dbReference type="Rhea" id="RHEA:13289"/>
        <dbReference type="Rhea" id="RHEA-COMP:19498"/>
        <dbReference type="Rhea" id="RHEA-COMP:19507"/>
        <dbReference type="ChEBI" id="CHEBI:57683"/>
        <dbReference type="ChEBI" id="CHEBI:57705"/>
        <dbReference type="ChEBI" id="CHEBI:57865"/>
        <dbReference type="ChEBI" id="CHEBI:58427"/>
        <dbReference type="EC" id="2.7.8.15"/>
    </reaction>
    <physiologicalReaction direction="left-to-right" evidence="2">
        <dbReference type="Rhea" id="RHEA:13290"/>
    </physiologicalReaction>
</comment>
<comment type="cofactor">
    <cofactor evidence="2">
        <name>Mg(2+)</name>
        <dbReference type="ChEBI" id="CHEBI:18420"/>
    </cofactor>
</comment>
<comment type="activity regulation">
    <text evidence="1">Inhibited by natural nucleoside antibiotic tunicamycin, which acts as a structural analog and competitor of UDP-GlcNAc.</text>
</comment>
<comment type="pathway">
    <text evidence="2">Protein modification; protein glycosylation.</text>
</comment>
<comment type="subunit">
    <text evidence="2">Homodimer.</text>
</comment>
<comment type="subcellular location">
    <subcellularLocation>
        <location evidence="1">Endoplasmic reticulum membrane</location>
        <topology evidence="2">Multi-pass membrane protein</topology>
    </subcellularLocation>
</comment>
<comment type="similarity">
    <text evidence="4">Belongs to the glycosyltransferase 4 family.</text>
</comment>
<accession>P0CD61</accession>
<gene>
    <name type="primary">alg7</name>
    <name type="ORF">DDB_G0290751</name>
</gene>
<reference key="1">
    <citation type="journal article" date="2005" name="Nature">
        <title>The genome of the social amoeba Dictyostelium discoideum.</title>
        <authorList>
            <person name="Eichinger L."/>
            <person name="Pachebat J.A."/>
            <person name="Gloeckner G."/>
            <person name="Rajandream M.A."/>
            <person name="Sucgang R."/>
            <person name="Berriman M."/>
            <person name="Song J."/>
            <person name="Olsen R."/>
            <person name="Szafranski K."/>
            <person name="Xu Q."/>
            <person name="Tunggal B."/>
            <person name="Kummerfeld S."/>
            <person name="Madera M."/>
            <person name="Konfortov B.A."/>
            <person name="Rivero F."/>
            <person name="Bankier A.T."/>
            <person name="Lehmann R."/>
            <person name="Hamlin N."/>
            <person name="Davies R."/>
            <person name="Gaudet P."/>
            <person name="Fey P."/>
            <person name="Pilcher K."/>
            <person name="Chen G."/>
            <person name="Saunders D."/>
            <person name="Sodergren E.J."/>
            <person name="Davis P."/>
            <person name="Kerhornou A."/>
            <person name="Nie X."/>
            <person name="Hall N."/>
            <person name="Anjard C."/>
            <person name="Hemphill L."/>
            <person name="Bason N."/>
            <person name="Farbrother P."/>
            <person name="Desany B."/>
            <person name="Just E."/>
            <person name="Morio T."/>
            <person name="Rost R."/>
            <person name="Churcher C.M."/>
            <person name="Cooper J."/>
            <person name="Haydock S."/>
            <person name="van Driessche N."/>
            <person name="Cronin A."/>
            <person name="Goodhead I."/>
            <person name="Muzny D.M."/>
            <person name="Mourier T."/>
            <person name="Pain A."/>
            <person name="Lu M."/>
            <person name="Harper D."/>
            <person name="Lindsay R."/>
            <person name="Hauser H."/>
            <person name="James K.D."/>
            <person name="Quiles M."/>
            <person name="Madan Babu M."/>
            <person name="Saito T."/>
            <person name="Buchrieser C."/>
            <person name="Wardroper A."/>
            <person name="Felder M."/>
            <person name="Thangavelu M."/>
            <person name="Johnson D."/>
            <person name="Knights A."/>
            <person name="Loulseged H."/>
            <person name="Mungall K.L."/>
            <person name="Oliver K."/>
            <person name="Price C."/>
            <person name="Quail M.A."/>
            <person name="Urushihara H."/>
            <person name="Hernandez J."/>
            <person name="Rabbinowitsch E."/>
            <person name="Steffen D."/>
            <person name="Sanders M."/>
            <person name="Ma J."/>
            <person name="Kohara Y."/>
            <person name="Sharp S."/>
            <person name="Simmonds M.N."/>
            <person name="Spiegler S."/>
            <person name="Tivey A."/>
            <person name="Sugano S."/>
            <person name="White B."/>
            <person name="Walker D."/>
            <person name="Woodward J.R."/>
            <person name="Winckler T."/>
            <person name="Tanaka Y."/>
            <person name="Shaulsky G."/>
            <person name="Schleicher M."/>
            <person name="Weinstock G.M."/>
            <person name="Rosenthal A."/>
            <person name="Cox E.C."/>
            <person name="Chisholm R.L."/>
            <person name="Gibbs R.A."/>
            <person name="Loomis W.F."/>
            <person name="Platzer M."/>
            <person name="Kay R.R."/>
            <person name="Williams J.G."/>
            <person name="Dear P.H."/>
            <person name="Noegel A.A."/>
            <person name="Barrell B.G."/>
            <person name="Kuspa A."/>
        </authorList>
    </citation>
    <scope>NUCLEOTIDE SEQUENCE [LARGE SCALE GENOMIC DNA]</scope>
    <source>
        <strain>AX4</strain>
    </source>
</reference>
<evidence type="ECO:0000250" key="1">
    <source>
        <dbReference type="UniProtKB" id="P23338"/>
    </source>
</evidence>
<evidence type="ECO:0000250" key="2">
    <source>
        <dbReference type="UniProtKB" id="Q9H3H5"/>
    </source>
</evidence>
<evidence type="ECO:0000255" key="3"/>
<evidence type="ECO:0000305" key="4"/>
<sequence length="408" mass="45452">MIFDKSLLGFIGICCLPPILLLIYLPNVSLQWIIVQSGFFSFGAGLLTYKLIPSVADLTSQANLTGMDLNKKGDPKFSGKKIPESLGICVAVVYLVCVILFQTFQWFSFPETIQLSEYNAALTSICFMILLGFGDDVLNLRWRYKLILPMFASLPLLVAYAGGTTVVVPDINFPVPLREWLGVVFDLGIFYRIYLLMLAIFCTNSINILAGINGLEVGQSVVIATSIIIHNLIELTIASSVPSSSSFSSSALSSVSPHLFSLILMIPFLFTTISLLFYNWYPSRVFVGDTYTYFSGMCFAVVAILCHFSKTLLLFFIPQILNFLYSVPQLFGIIPCPRHRVPKFNPETGKMEAIPTNLTIINLLLMITGPLTERQLCVYLLIFQGLCSCVGFGIRYHHLHHNPTLIFI</sequence>
<feature type="chain" id="PRO_0000391334" description="UDP-N-acetylglucosamine--dolichyl-phosphate N-acetylglucosaminephosphotransferase">
    <location>
        <begin position="1"/>
        <end position="408"/>
    </location>
</feature>
<feature type="transmembrane region" description="Helical" evidence="3">
    <location>
        <begin position="6"/>
        <end position="26"/>
    </location>
</feature>
<feature type="transmembrane region" description="Helical" evidence="3">
    <location>
        <begin position="32"/>
        <end position="52"/>
    </location>
</feature>
<feature type="transmembrane region" description="Helical" evidence="3">
    <location>
        <begin position="87"/>
        <end position="107"/>
    </location>
</feature>
<feature type="transmembrane region" description="Helical" evidence="3">
    <location>
        <begin position="120"/>
        <end position="140"/>
    </location>
</feature>
<feature type="transmembrane region" description="Helical" evidence="3">
    <location>
        <begin position="147"/>
        <end position="167"/>
    </location>
</feature>
<feature type="transmembrane region" description="Helical" evidence="3">
    <location>
        <begin position="181"/>
        <end position="201"/>
    </location>
</feature>
<feature type="transmembrane region" description="Helical" evidence="3">
    <location>
        <begin position="221"/>
        <end position="241"/>
    </location>
</feature>
<feature type="transmembrane region" description="Helical" evidence="3">
    <location>
        <begin position="258"/>
        <end position="278"/>
    </location>
</feature>
<feature type="transmembrane region" description="Helical" evidence="3">
    <location>
        <begin position="297"/>
        <end position="317"/>
    </location>
</feature>
<feature type="transmembrane region" description="Helical" evidence="3">
    <location>
        <begin position="351"/>
        <end position="371"/>
    </location>
</feature>
<feature type="transmembrane region" description="Helical" evidence="3">
    <location>
        <begin position="376"/>
        <end position="396"/>
    </location>
</feature>
<feature type="binding site" evidence="2">
    <location>
        <position position="68"/>
    </location>
    <ligand>
        <name>UDP-N-acetyl-alpha-D-glucosamine</name>
        <dbReference type="ChEBI" id="CHEBI:57705"/>
    </ligand>
</feature>
<feature type="binding site" evidence="2">
    <location>
        <position position="84"/>
    </location>
    <ligand>
        <name>UDP-N-acetyl-alpha-D-glucosamine</name>
        <dbReference type="ChEBI" id="CHEBI:57705"/>
    </ligand>
</feature>
<feature type="binding site" evidence="2">
    <location>
        <position position="145"/>
    </location>
    <ligand>
        <name>dolichyl phosphate</name>
        <dbReference type="ChEBI" id="CHEBI:57683"/>
    </ligand>
</feature>
<feature type="binding site" evidence="2">
    <location>
        <begin position="200"/>
        <end position="208"/>
    </location>
    <ligand>
        <name>dolichyl phosphate</name>
        <dbReference type="ChEBI" id="CHEBI:57683"/>
    </ligand>
</feature>
<feature type="binding site" evidence="2">
    <location>
        <position position="207"/>
    </location>
    <ligand>
        <name>Mg(2+)</name>
        <dbReference type="ChEBI" id="CHEBI:18420"/>
    </ligand>
</feature>
<feature type="binding site" evidence="2">
    <location>
        <position position="213"/>
    </location>
    <ligand>
        <name>UDP-N-acetyl-alpha-D-glucosamine</name>
        <dbReference type="ChEBI" id="CHEBI:57705"/>
    </ligand>
</feature>
<feature type="binding site" evidence="2">
    <location>
        <position position="289"/>
    </location>
    <ligand>
        <name>Mg(2+)</name>
        <dbReference type="ChEBI" id="CHEBI:18420"/>
    </ligand>
</feature>
<feature type="binding site" evidence="2">
    <location>
        <begin position="338"/>
        <end position="340"/>
    </location>
    <ligand>
        <name>UDP-N-acetyl-alpha-D-glucosamine</name>
        <dbReference type="ChEBI" id="CHEBI:57705"/>
    </ligand>
</feature>
<keyword id="KW-0256">Endoplasmic reticulum</keyword>
<keyword id="KW-0328">Glycosyltransferase</keyword>
<keyword id="KW-0460">Magnesium</keyword>
<keyword id="KW-0472">Membrane</keyword>
<keyword id="KW-0479">Metal-binding</keyword>
<keyword id="KW-1185">Reference proteome</keyword>
<keyword id="KW-0808">Transferase</keyword>
<keyword id="KW-0812">Transmembrane</keyword>
<keyword id="KW-1133">Transmembrane helix</keyword>